<organism>
    <name type="scientific">Staphylococcus aureus (strain Mu50 / ATCC 700699)</name>
    <dbReference type="NCBI Taxonomy" id="158878"/>
    <lineage>
        <taxon>Bacteria</taxon>
        <taxon>Bacillati</taxon>
        <taxon>Bacillota</taxon>
        <taxon>Bacilli</taxon>
        <taxon>Bacillales</taxon>
        <taxon>Staphylococcaceae</taxon>
        <taxon>Staphylococcus</taxon>
    </lineage>
</organism>
<evidence type="ECO:0000255" key="1">
    <source>
        <dbReference type="HAMAP-Rule" id="MF_02068"/>
    </source>
</evidence>
<sequence>MKYAGILAGGIGSRMGNVPLPKQFLDLDNKPILIHTLEKFILINDFEKIIIATPQQWMTHTKDTLRKFKISDERIEVIQGGSDRNDTIMNIVKHIESTNGINDDDVIVTHDAVRPFLTHRIIKENIQAALEYGAVDTVIDAIDTIVTSKDNQTIDAIPVRNEMYQGQTPQSFNINLLKESYAQLSDEQKSILSDACKIIVETNKPVRLVKGELYNIKVTTPYDLKVANAIIRGGIADD</sequence>
<feature type="chain" id="PRO_0000075616" description="Ribitol-5-phosphate cytidylyltransferase 1">
    <location>
        <begin position="1"/>
        <end position="238"/>
    </location>
</feature>
<feature type="binding site" evidence="1">
    <location>
        <begin position="7"/>
        <end position="10"/>
    </location>
    <ligand>
        <name>CTP</name>
        <dbReference type="ChEBI" id="CHEBI:37563"/>
    </ligand>
</feature>
<feature type="binding site" evidence="1">
    <location>
        <begin position="81"/>
        <end position="87"/>
    </location>
    <ligand>
        <name>CTP</name>
        <dbReference type="ChEBI" id="CHEBI:37563"/>
    </ligand>
</feature>
<feature type="site" description="Transition state stabilizer" evidence="1">
    <location>
        <position position="14"/>
    </location>
</feature>
<feature type="site" description="Transition state stabilizer" evidence="1">
    <location>
        <position position="22"/>
    </location>
</feature>
<feature type="site" description="Positions ribitol 5-phosphate for the nucleophilic attack" evidence="1">
    <location>
        <position position="160"/>
    </location>
</feature>
<feature type="site" description="Positions ribitol 5-phosphate for the nucleophilic attack" evidence="1">
    <location>
        <position position="217"/>
    </location>
</feature>
<comment type="function">
    <text evidence="1">Catalyzes the transfer of the cytidylyl group of CTP to D-ribitol 5-phosphate.</text>
</comment>
<comment type="catalytic activity">
    <reaction evidence="1">
        <text>D-ribitol 5-phosphate + CTP + H(+) = CDP-L-ribitol + diphosphate</text>
        <dbReference type="Rhea" id="RHEA:12456"/>
        <dbReference type="ChEBI" id="CHEBI:15378"/>
        <dbReference type="ChEBI" id="CHEBI:33019"/>
        <dbReference type="ChEBI" id="CHEBI:37563"/>
        <dbReference type="ChEBI" id="CHEBI:57608"/>
        <dbReference type="ChEBI" id="CHEBI:57695"/>
        <dbReference type="EC" id="2.7.7.40"/>
    </reaction>
</comment>
<comment type="pathway">
    <text evidence="1">Cell wall biogenesis; poly(ribitol phosphate) teichoic acid biosynthesis.</text>
</comment>
<comment type="similarity">
    <text evidence="1">Belongs to the IspD/TarI cytidylyltransferase family. TarI subfamily.</text>
</comment>
<gene>
    <name evidence="1" type="primary">tarI1</name>
    <name type="ordered locus">SAV0255</name>
</gene>
<reference key="1">
    <citation type="journal article" date="2001" name="Lancet">
        <title>Whole genome sequencing of meticillin-resistant Staphylococcus aureus.</title>
        <authorList>
            <person name="Kuroda M."/>
            <person name="Ohta T."/>
            <person name="Uchiyama I."/>
            <person name="Baba T."/>
            <person name="Yuzawa H."/>
            <person name="Kobayashi I."/>
            <person name="Cui L."/>
            <person name="Oguchi A."/>
            <person name="Aoki K."/>
            <person name="Nagai Y."/>
            <person name="Lian J.-Q."/>
            <person name="Ito T."/>
            <person name="Kanamori M."/>
            <person name="Matsumaru H."/>
            <person name="Maruyama A."/>
            <person name="Murakami H."/>
            <person name="Hosoyama A."/>
            <person name="Mizutani-Ui Y."/>
            <person name="Takahashi N.K."/>
            <person name="Sawano T."/>
            <person name="Inoue R."/>
            <person name="Kaito C."/>
            <person name="Sekimizu K."/>
            <person name="Hirakawa H."/>
            <person name="Kuhara S."/>
            <person name="Goto S."/>
            <person name="Yabuzaki J."/>
            <person name="Kanehisa M."/>
            <person name="Yamashita A."/>
            <person name="Oshima K."/>
            <person name="Furuya K."/>
            <person name="Yoshino C."/>
            <person name="Shiba T."/>
            <person name="Hattori M."/>
            <person name="Ogasawara N."/>
            <person name="Hayashi H."/>
            <person name="Hiramatsu K."/>
        </authorList>
    </citation>
    <scope>NUCLEOTIDE SEQUENCE [LARGE SCALE GENOMIC DNA]</scope>
    <source>
        <strain>Mu50 / ATCC 700699</strain>
    </source>
</reference>
<accession>Q99WW8</accession>
<proteinExistence type="inferred from homology"/>
<keyword id="KW-0961">Cell wall biogenesis/degradation</keyword>
<keyword id="KW-0548">Nucleotidyltransferase</keyword>
<keyword id="KW-0777">Teichoic acid biosynthesis</keyword>
<keyword id="KW-0808">Transferase</keyword>
<dbReference type="EC" id="2.7.7.40" evidence="1"/>
<dbReference type="EMBL" id="BA000017">
    <property type="protein sequence ID" value="BAB56417.1"/>
    <property type="molecule type" value="Genomic_DNA"/>
</dbReference>
<dbReference type="RefSeq" id="WP_000872486.1">
    <property type="nucleotide sequence ID" value="NC_002758.2"/>
</dbReference>
<dbReference type="SMR" id="Q99WW8"/>
<dbReference type="KEGG" id="sav:SAV0255"/>
<dbReference type="HOGENOM" id="CLU_061281_2_3_9"/>
<dbReference type="PhylomeDB" id="Q99WW8"/>
<dbReference type="UniPathway" id="UPA00790"/>
<dbReference type="Proteomes" id="UP000002481">
    <property type="component" value="Chromosome"/>
</dbReference>
<dbReference type="GO" id="GO:0050518">
    <property type="term" value="F:2-C-methyl-D-erythritol 4-phosphate cytidylyltransferase activity"/>
    <property type="evidence" value="ECO:0007669"/>
    <property type="project" value="TreeGrafter"/>
</dbReference>
<dbReference type="GO" id="GO:0047349">
    <property type="term" value="F:D-ribitol-5-phosphate cytidylyltransferase activity"/>
    <property type="evidence" value="ECO:0007669"/>
    <property type="project" value="UniProtKB-UniRule"/>
</dbReference>
<dbReference type="GO" id="GO:0071555">
    <property type="term" value="P:cell wall organization"/>
    <property type="evidence" value="ECO:0007669"/>
    <property type="project" value="UniProtKB-KW"/>
</dbReference>
<dbReference type="GO" id="GO:0008299">
    <property type="term" value="P:isoprenoid biosynthetic process"/>
    <property type="evidence" value="ECO:0007669"/>
    <property type="project" value="InterPro"/>
</dbReference>
<dbReference type="GO" id="GO:1902012">
    <property type="term" value="P:poly(ribitol phosphate) teichoic acid biosynthetic process"/>
    <property type="evidence" value="ECO:0007669"/>
    <property type="project" value="UniProtKB-UniRule"/>
</dbReference>
<dbReference type="CDD" id="cd02516">
    <property type="entry name" value="CDP-ME_synthetase"/>
    <property type="match status" value="1"/>
</dbReference>
<dbReference type="FunFam" id="3.90.550.10:FF:000003">
    <property type="entry name" value="2-C-methyl-D-erythritol 4-phosphate cytidylyltransferase"/>
    <property type="match status" value="1"/>
</dbReference>
<dbReference type="Gene3D" id="3.90.550.10">
    <property type="entry name" value="Spore Coat Polysaccharide Biosynthesis Protein SpsA, Chain A"/>
    <property type="match status" value="1"/>
</dbReference>
<dbReference type="HAMAP" id="MF_02068">
    <property type="entry name" value="TarI"/>
    <property type="match status" value="1"/>
</dbReference>
<dbReference type="InterPro" id="IPR034683">
    <property type="entry name" value="IspD/TarI"/>
</dbReference>
<dbReference type="InterPro" id="IPR050088">
    <property type="entry name" value="IspD/TarI_cytidylyltransf_bact"/>
</dbReference>
<dbReference type="InterPro" id="IPR018294">
    <property type="entry name" value="ISPD_synthase_CS"/>
</dbReference>
<dbReference type="InterPro" id="IPR029044">
    <property type="entry name" value="Nucleotide-diphossugar_trans"/>
</dbReference>
<dbReference type="InterPro" id="IPR034709">
    <property type="entry name" value="TarI"/>
</dbReference>
<dbReference type="NCBIfam" id="NF001183">
    <property type="entry name" value="PRK00155.1-3"/>
    <property type="match status" value="1"/>
</dbReference>
<dbReference type="NCBIfam" id="NF009924">
    <property type="entry name" value="PRK13385.1"/>
    <property type="match status" value="1"/>
</dbReference>
<dbReference type="PANTHER" id="PTHR32125">
    <property type="entry name" value="2-C-METHYL-D-ERYTHRITOL 4-PHOSPHATE CYTIDYLYLTRANSFERASE, CHLOROPLASTIC"/>
    <property type="match status" value="1"/>
</dbReference>
<dbReference type="PANTHER" id="PTHR32125:SF8">
    <property type="entry name" value="RIBITOL-5-PHOSPHATE CYTIDYLYLTRANSFERASE"/>
    <property type="match status" value="1"/>
</dbReference>
<dbReference type="Pfam" id="PF01128">
    <property type="entry name" value="IspD"/>
    <property type="match status" value="1"/>
</dbReference>
<dbReference type="SUPFAM" id="SSF53448">
    <property type="entry name" value="Nucleotide-diphospho-sugar transferases"/>
    <property type="match status" value="1"/>
</dbReference>
<dbReference type="PROSITE" id="PS01295">
    <property type="entry name" value="ISPD"/>
    <property type="match status" value="1"/>
</dbReference>
<protein>
    <recommendedName>
        <fullName evidence="1">Ribitol-5-phosphate cytidylyltransferase 1</fullName>
        <ecNumber evidence="1">2.7.7.40</ecNumber>
    </recommendedName>
</protein>
<name>TARI1_STAAM</name>